<feature type="chain" id="PRO_0000185569" description="L-threonine dehydratase biosynthetic IlvA">
    <location>
        <begin position="1"/>
        <end position="415"/>
    </location>
</feature>
<feature type="domain" description="ACT-like" evidence="2">
    <location>
        <begin position="332"/>
        <end position="406"/>
    </location>
</feature>
<feature type="binding site" evidence="1">
    <location>
        <position position="80"/>
    </location>
    <ligand>
        <name>pyridoxal 5'-phosphate</name>
        <dbReference type="ChEBI" id="CHEBI:597326"/>
    </ligand>
</feature>
<feature type="binding site" evidence="1">
    <location>
        <begin position="183"/>
        <end position="187"/>
    </location>
    <ligand>
        <name>pyridoxal 5'-phosphate</name>
        <dbReference type="ChEBI" id="CHEBI:597326"/>
    </ligand>
</feature>
<feature type="binding site" evidence="1">
    <location>
        <position position="308"/>
    </location>
    <ligand>
        <name>pyridoxal 5'-phosphate</name>
        <dbReference type="ChEBI" id="CHEBI:597326"/>
    </ligand>
</feature>
<feature type="modified residue" description="N6-(pyridoxal phosphate)lysine" evidence="1">
    <location>
        <position position="53"/>
    </location>
</feature>
<sequence length="415" mass="46470">MGKIQIEDIIIANQTLKDVVVHTPLQKNQVLSERYECNVYLKREDMQVVRSFKIRGAFHQISSIPKEELNNGVVCASAGNHAQGVAYSCHTLQIPGKIFMPTTTPRQKVDQVKFFGKEYVEVILTGDTFDDSFNEAKEYGIKHKMTFIHPFDQEKIVAGQGTVGMEIMNDIDDNIDYLFCSIGGGGLISGVGTYIKSISPRTKVIGCEPAGAPAMKESLKQGKVIELEKIDKFVDGAAVKKVGEIPFEICQKILEDIVLVPEGKICTTILNLYNQDAIVAEPAGAMPIAALDFFKDEIKGKTVVCVLSGGNNDIGRMQEMRERSLIYEGLQHYFIIQFPQRAGALKEFILDVLGPDDDITRFEYTKKNNKSNGPVLIGIELKCDEDYHRLMDRLNKKGFEYREINKNESLFNLLI</sequence>
<gene>
    <name type="primary">ilvA</name>
    <name type="ordered locus">BH1711</name>
</gene>
<protein>
    <recommendedName>
        <fullName>L-threonine dehydratase biosynthetic IlvA</fullName>
        <ecNumber>4.3.1.19</ecNumber>
    </recommendedName>
    <alternativeName>
        <fullName>Threonine deaminase</fullName>
    </alternativeName>
</protein>
<proteinExistence type="inferred from homology"/>
<reference key="1">
    <citation type="journal article" date="2000" name="Nucleic Acids Res.">
        <title>Complete genome sequence of the alkaliphilic bacterium Bacillus halodurans and genomic sequence comparison with Bacillus subtilis.</title>
        <authorList>
            <person name="Takami H."/>
            <person name="Nakasone K."/>
            <person name="Takaki Y."/>
            <person name="Maeno G."/>
            <person name="Sasaki R."/>
            <person name="Masui N."/>
            <person name="Fuji F."/>
            <person name="Hirama C."/>
            <person name="Nakamura Y."/>
            <person name="Ogasawara N."/>
            <person name="Kuhara S."/>
            <person name="Horikoshi K."/>
        </authorList>
    </citation>
    <scope>NUCLEOTIDE SEQUENCE [LARGE SCALE GENOMIC DNA]</scope>
    <source>
        <strain>ATCC BAA-125 / DSM 18197 / FERM 7344 / JCM 9153 / C-125</strain>
    </source>
</reference>
<comment type="function">
    <text evidence="1">Catalyzes the anaerobic formation of alpha-ketobutyrate and ammonia from threonine in a two-step reaction. The first step involved a dehydration of threonine and a production of enamine intermediates (aminocrotonate), which tautomerizes to its imine form (iminobutyrate). Both intermediates are unstable and short-lived. The second step is the nonenzymatic hydrolysis of the enamine/imine intermediates to form 2-ketobutyrate and free ammonia. In the low water environment of the cell, the second step is accelerated by RidA (By similarity).</text>
</comment>
<comment type="catalytic activity">
    <reaction>
        <text>L-threonine = 2-oxobutanoate + NH4(+)</text>
        <dbReference type="Rhea" id="RHEA:22108"/>
        <dbReference type="ChEBI" id="CHEBI:16763"/>
        <dbReference type="ChEBI" id="CHEBI:28938"/>
        <dbReference type="ChEBI" id="CHEBI:57926"/>
        <dbReference type="EC" id="4.3.1.19"/>
    </reaction>
</comment>
<comment type="cofactor">
    <cofactor evidence="1">
        <name>pyridoxal 5'-phosphate</name>
        <dbReference type="ChEBI" id="CHEBI:597326"/>
    </cofactor>
</comment>
<comment type="pathway">
    <text>Amino-acid biosynthesis; L-isoleucine biosynthesis; 2-oxobutanoate from L-threonine: step 1/1.</text>
</comment>
<comment type="subunit">
    <text evidence="1">Homotetramer.</text>
</comment>
<comment type="similarity">
    <text evidence="3">Belongs to the serine/threonine dehydratase family.</text>
</comment>
<name>ILVA_HALH5</name>
<dbReference type="EC" id="4.3.1.19"/>
<dbReference type="EMBL" id="BA000004">
    <property type="protein sequence ID" value="BAB05430.1"/>
    <property type="molecule type" value="Genomic_DNA"/>
</dbReference>
<dbReference type="PIR" id="G83863">
    <property type="entry name" value="G83863"/>
</dbReference>
<dbReference type="RefSeq" id="WP_010897872.1">
    <property type="nucleotide sequence ID" value="NC_002570.2"/>
</dbReference>
<dbReference type="SMR" id="Q9KC63"/>
<dbReference type="STRING" id="272558.gene:10727609"/>
<dbReference type="GeneID" id="87597326"/>
<dbReference type="KEGG" id="bha:BH1711"/>
<dbReference type="eggNOG" id="COG1171">
    <property type="taxonomic scope" value="Bacteria"/>
</dbReference>
<dbReference type="HOGENOM" id="CLU_021152_4_2_9"/>
<dbReference type="OrthoDB" id="9811476at2"/>
<dbReference type="UniPathway" id="UPA00047">
    <property type="reaction ID" value="UER00054"/>
</dbReference>
<dbReference type="Proteomes" id="UP000001258">
    <property type="component" value="Chromosome"/>
</dbReference>
<dbReference type="GO" id="GO:0003941">
    <property type="term" value="F:L-serine ammonia-lyase activity"/>
    <property type="evidence" value="ECO:0007669"/>
    <property type="project" value="TreeGrafter"/>
</dbReference>
<dbReference type="GO" id="GO:0030170">
    <property type="term" value="F:pyridoxal phosphate binding"/>
    <property type="evidence" value="ECO:0007669"/>
    <property type="project" value="InterPro"/>
</dbReference>
<dbReference type="GO" id="GO:0004794">
    <property type="term" value="F:threonine deaminase activity"/>
    <property type="evidence" value="ECO:0007669"/>
    <property type="project" value="UniProtKB-EC"/>
</dbReference>
<dbReference type="GO" id="GO:0009097">
    <property type="term" value="P:isoleucine biosynthetic process"/>
    <property type="evidence" value="ECO:0007669"/>
    <property type="project" value="UniProtKB-UniPathway"/>
</dbReference>
<dbReference type="GO" id="GO:0006565">
    <property type="term" value="P:L-serine catabolic process"/>
    <property type="evidence" value="ECO:0007669"/>
    <property type="project" value="TreeGrafter"/>
</dbReference>
<dbReference type="GO" id="GO:0006567">
    <property type="term" value="P:threonine catabolic process"/>
    <property type="evidence" value="ECO:0007669"/>
    <property type="project" value="TreeGrafter"/>
</dbReference>
<dbReference type="GO" id="GO:0006566">
    <property type="term" value="P:threonine metabolic process"/>
    <property type="evidence" value="ECO:0000250"/>
    <property type="project" value="UniProtKB"/>
</dbReference>
<dbReference type="CDD" id="cd04907">
    <property type="entry name" value="ACT_ThrD-I_2"/>
    <property type="match status" value="1"/>
</dbReference>
<dbReference type="CDD" id="cd01562">
    <property type="entry name" value="Thr-dehyd"/>
    <property type="match status" value="1"/>
</dbReference>
<dbReference type="FunFam" id="3.40.1020.10:FF:000002">
    <property type="entry name" value="L-threonine dehydratase"/>
    <property type="match status" value="1"/>
</dbReference>
<dbReference type="FunFam" id="3.40.50.1100:FF:000007">
    <property type="entry name" value="L-threonine dehydratase catabolic TdcB"/>
    <property type="match status" value="1"/>
</dbReference>
<dbReference type="Gene3D" id="3.40.50.1100">
    <property type="match status" value="2"/>
</dbReference>
<dbReference type="Gene3D" id="3.40.1020.10">
    <property type="entry name" value="Biosynthetic Threonine Deaminase, Domain 3"/>
    <property type="match status" value="1"/>
</dbReference>
<dbReference type="InterPro" id="IPR045865">
    <property type="entry name" value="ACT-like_dom_sf"/>
</dbReference>
<dbReference type="InterPro" id="IPR011820">
    <property type="entry name" value="IlvA"/>
</dbReference>
<dbReference type="InterPro" id="IPR050147">
    <property type="entry name" value="Ser/Thr_Dehydratase"/>
</dbReference>
<dbReference type="InterPro" id="IPR000634">
    <property type="entry name" value="Ser/Thr_deHydtase_PyrdxlP-BS"/>
</dbReference>
<dbReference type="InterPro" id="IPR001721">
    <property type="entry name" value="TD_ACT-like"/>
</dbReference>
<dbReference type="InterPro" id="IPR038110">
    <property type="entry name" value="TD_ACT-like_sf"/>
</dbReference>
<dbReference type="InterPro" id="IPR001926">
    <property type="entry name" value="TrpB-like_PALP"/>
</dbReference>
<dbReference type="InterPro" id="IPR036052">
    <property type="entry name" value="TrpB-like_PALP_sf"/>
</dbReference>
<dbReference type="NCBIfam" id="NF006390">
    <property type="entry name" value="PRK08639.1"/>
    <property type="match status" value="1"/>
</dbReference>
<dbReference type="NCBIfam" id="TIGR02079">
    <property type="entry name" value="THD1"/>
    <property type="match status" value="1"/>
</dbReference>
<dbReference type="PANTHER" id="PTHR48078:SF11">
    <property type="entry name" value="THREONINE DEHYDRATASE, MITOCHONDRIAL"/>
    <property type="match status" value="1"/>
</dbReference>
<dbReference type="PANTHER" id="PTHR48078">
    <property type="entry name" value="THREONINE DEHYDRATASE, MITOCHONDRIAL-RELATED"/>
    <property type="match status" value="1"/>
</dbReference>
<dbReference type="Pfam" id="PF00291">
    <property type="entry name" value="PALP"/>
    <property type="match status" value="1"/>
</dbReference>
<dbReference type="Pfam" id="PF00585">
    <property type="entry name" value="Thr_dehydrat_C"/>
    <property type="match status" value="1"/>
</dbReference>
<dbReference type="SUPFAM" id="SSF55021">
    <property type="entry name" value="ACT-like"/>
    <property type="match status" value="1"/>
</dbReference>
<dbReference type="SUPFAM" id="SSF53686">
    <property type="entry name" value="Tryptophan synthase beta subunit-like PLP-dependent enzymes"/>
    <property type="match status" value="1"/>
</dbReference>
<dbReference type="PROSITE" id="PS51672">
    <property type="entry name" value="ACT_LIKE"/>
    <property type="match status" value="1"/>
</dbReference>
<dbReference type="PROSITE" id="PS00165">
    <property type="entry name" value="DEHYDRATASE_SER_THR"/>
    <property type="match status" value="1"/>
</dbReference>
<keyword id="KW-0028">Amino-acid biosynthesis</keyword>
<keyword id="KW-0100">Branched-chain amino acid biosynthesis</keyword>
<keyword id="KW-0412">Isoleucine biosynthesis</keyword>
<keyword id="KW-0456">Lyase</keyword>
<keyword id="KW-0663">Pyridoxal phosphate</keyword>
<keyword id="KW-1185">Reference proteome</keyword>
<organism>
    <name type="scientific">Halalkalibacterium halodurans (strain ATCC BAA-125 / DSM 18197 / FERM 7344 / JCM 9153 / C-125)</name>
    <name type="common">Bacillus halodurans</name>
    <dbReference type="NCBI Taxonomy" id="272558"/>
    <lineage>
        <taxon>Bacteria</taxon>
        <taxon>Bacillati</taxon>
        <taxon>Bacillota</taxon>
        <taxon>Bacilli</taxon>
        <taxon>Bacillales</taxon>
        <taxon>Bacillaceae</taxon>
        <taxon>Halalkalibacterium (ex Joshi et al. 2022)</taxon>
    </lineage>
</organism>
<accession>Q9KC63</accession>
<evidence type="ECO:0000250" key="1"/>
<evidence type="ECO:0000255" key="2">
    <source>
        <dbReference type="PROSITE-ProRule" id="PRU01008"/>
    </source>
</evidence>
<evidence type="ECO:0000305" key="3"/>